<feature type="chain" id="PRO_0000119807" description="Cullin-8">
    <location>
        <begin position="1"/>
        <end position="842"/>
    </location>
</feature>
<feature type="region of interest" description="Required for interaction with MMS1">
    <location>
        <begin position="1"/>
        <end position="50"/>
    </location>
</feature>
<feature type="region of interest" description="Disordered" evidence="2">
    <location>
        <begin position="755"/>
        <end position="775"/>
    </location>
</feature>
<feature type="compositionally biased region" description="Polar residues" evidence="2">
    <location>
        <begin position="755"/>
        <end position="765"/>
    </location>
</feature>
<feature type="cross-link" description="Glycyl lysine isopeptide (Lys-Gly) (interchain with G-Cter in NEDD8)" evidence="5">
    <location>
        <position position="791"/>
    </location>
</feature>
<feature type="mutagenesis site" description="Disrupts interaction with HRT1 and prevents RUB1/NEDD8 modification." evidence="4">
    <location>
        <begin position="680"/>
        <end position="686"/>
    </location>
</feature>
<feature type="mutagenesis site" description="Prevents RUB1/NEDD8 modification." evidence="4 5">
    <original>K</original>
    <variation>A</variation>
    <variation>R</variation>
    <location>
        <position position="791"/>
    </location>
</feature>
<name>CUL8_YEAST</name>
<evidence type="ECO:0000255" key="1">
    <source>
        <dbReference type="PROSITE-ProRule" id="PRU00330"/>
    </source>
</evidence>
<evidence type="ECO:0000256" key="2">
    <source>
        <dbReference type="SAM" id="MobiDB-lite"/>
    </source>
</evidence>
<evidence type="ECO:0000269" key="3">
    <source>
    </source>
</evidence>
<evidence type="ECO:0000269" key="4">
    <source>
    </source>
</evidence>
<evidence type="ECO:0000269" key="5">
    <source>
    </source>
</evidence>
<evidence type="ECO:0000269" key="6">
    <source>
    </source>
</evidence>
<evidence type="ECO:0000269" key="7">
    <source>
    </source>
</evidence>
<evidence type="ECO:0000269" key="8">
    <source>
    </source>
</evidence>
<evidence type="ECO:0000269" key="9">
    <source>
    </source>
</evidence>
<evidence type="ECO:0000269" key="10">
    <source>
    </source>
</evidence>
<evidence type="ECO:0000269" key="11">
    <source>
    </source>
</evidence>
<evidence type="ECO:0000269" key="12">
    <source>
    </source>
</evidence>
<evidence type="ECO:0000269" key="13">
    <source>
    </source>
</evidence>
<evidence type="ECO:0000269" key="14">
    <source>
    </source>
</evidence>
<evidence type="ECO:0000269" key="15">
    <source>
    </source>
</evidence>
<protein>
    <recommendedName>
        <fullName>Cullin-8</fullName>
    </recommendedName>
    <alternativeName>
        <fullName>Cullin-C</fullName>
    </alternativeName>
    <alternativeName>
        <fullName>Regulator of Ty1 transposition protein 101</fullName>
    </alternativeName>
</protein>
<comment type="function">
    <text evidence="3 4 7 8 9 10 11 13 14 15">Core component of multiple cullin-RING-based E3 ubiquitin-protein ligase complexes (CRLs), which mediate the ubiquitination of target proteins. As a scaffold protein may contribute to catalysis through positioning of the substrate and the ubiquitin-conjugating enzyme. The CRL associates with CDC34 as the E2 ubiquitin-conjugating enzyme. The functional specificity of the CRL depends on the type of the associated substrate receptor protein. RTT101(MMS1-MMS22) promotes fork progression through damaged DNA or natural pause sites by stabilizing replication proteins like the replication fork-pausing complex (FPC) and leading-strand polymerase at stalled replication forks. RTT101(MMS1-MMS22) ubiquitinates the acetylated histones H3K56ac-H4 at lysine residues H3K121, H3K122 and H3K125. Ubiquitination is required for efficient histone deposition during replication-coupled nucleosome assembly, probably by facilitating the transfer of H3-H4 from ASF1 to other chaperones involved in histone deposition. RTT101(MMS1-CRT10) may regulate nucleotide synthesis through transcriptional regulation of ribonucleotide reductase. RTT101(MMS1) is also involved in the non-functional rRNA decay (NRD) of 25S rRNA through the selective, ubiquitination-dependent degradation of nonfunctional ribosomal particles. Ubiquitinates the FACT (facilitates chromatin transcription) complex subunit SPT16 in an MMS1-independent manner. Involved in regulation of Ty1 transposition and protects the genome from Ty1 integration upstream of tRNA genes.</text>
</comment>
<comment type="pathway">
    <text>Protein modification; protein ubiquitination.</text>
</comment>
<comment type="subunit">
    <text evidence="4 8 10 12">Component of multiple cullin-RING ligases (CRLs) composed of 4 subunits: the RING protein HRT1, the cullin RTT101, a linker protein MMS1, and one of many alternative substrate receptors belonging to a protein family described as DCAF (DDB1- and CUL4-associated factor). Component of a RTT101(MMS1-MMS22) complex with the substrate receptor MMS22. This complex further interacts with RTT107 and CTF4 to form RTT101-MMS1-MMS22-RTT107 and RTT101-MMS1-MMS22-CTF4 complexes respectively. Component of a RTT101(MSS1-CRT10) complex with the substrate receptor CRT10. Component of a RTT101(MSS1-ESC2) complex with the potential substrate receptor ESC2. Component of a RTT101(MSS1-ORC5) complex with the potential substrate receptor ORC5. Interacts (via C-ter) with HRT1; required for ubiquitin-ligase activity. Interacts (via N-ter) with MMS1.</text>
</comment>
<comment type="interaction">
    <interactant intactId="EBI-25861">
        <id>P47050</id>
    </interactant>
    <interactant intactId="EBI-19730">
        <id>P14682</id>
        <label>CDC34</label>
    </interactant>
    <organismsDiffer>false</organismsDiffer>
    <experiments>2</experiments>
</comment>
<comment type="interaction">
    <interactant intactId="EBI-25861">
        <id>P47050</id>
    </interactant>
    <interactant intactId="EBI-30025">
        <id>Q08226</id>
        <label>CRT10</label>
    </interactant>
    <organismsDiffer>false</organismsDiffer>
    <experiments>2</experiments>
</comment>
<comment type="interaction">
    <interactant intactId="EBI-25861">
        <id>P47050</id>
    </interactant>
    <interactant intactId="EBI-33799">
        <id>Q06340</id>
        <label>ESC2</label>
    </interactant>
    <organismsDiffer>false</organismsDiffer>
    <experiments>4</experiments>
</comment>
<comment type="interaction">
    <interactant intactId="EBI-25861">
        <id>P47050</id>
    </interactant>
    <interactant intactId="EBI-31686">
        <id>Q08273</id>
        <label>HRT1</label>
    </interactant>
    <organismsDiffer>false</organismsDiffer>
    <experiments>3</experiments>
</comment>
<comment type="interaction">
    <interactant intactId="EBI-25861">
        <id>P47050</id>
    </interactant>
    <interactant intactId="EBI-38894">
        <id>Q06211</id>
        <label>MMS1</label>
    </interactant>
    <organismsDiffer>false</organismsDiffer>
    <experiments>13</experiments>
</comment>
<comment type="interaction">
    <interactant intactId="EBI-25861">
        <id>P47050</id>
    </interactant>
    <interactant intactId="EBI-31156">
        <id>Q06164</id>
        <label>MMS22</label>
    </interactant>
    <organismsDiffer>false</organismsDiffer>
    <experiments>11</experiments>
</comment>
<comment type="interaction">
    <interactant intactId="EBI-25861">
        <id>P47050</id>
    </interactant>
    <interactant intactId="EBI-12584">
        <id>P50874</id>
        <label>ORC5</label>
    </interactant>
    <organismsDiffer>false</organismsDiffer>
    <experiments>3</experiments>
</comment>
<comment type="interaction">
    <interactant intactId="EBI-25861">
        <id>P47050</id>
    </interactant>
    <interactant intactId="EBI-24788">
        <id>P38850</id>
        <label>RTT107</label>
    </interactant>
    <organismsDiffer>false</organismsDiffer>
    <experiments>5</experiments>
</comment>
<comment type="subcellular location">
    <subcellularLocation>
        <location evidence="6">Cytoplasm</location>
    </subcellularLocation>
    <subcellularLocation>
        <location evidence="6">Nucleus</location>
    </subcellularLocation>
    <text>Recruited to chromatin in response to replication fork stalling.</text>
</comment>
<comment type="PTM">
    <text evidence="5">Neddylated. HRT1-binding is necessary for RUB1/NEDD8 modification of RTT101. The modification enhances ubiquitin-ligase activity.</text>
</comment>
<comment type="disruption phenotype">
    <text evidence="4">Delays anaphase progression.</text>
</comment>
<comment type="similarity">
    <text evidence="1">Belongs to the cullin family.</text>
</comment>
<gene>
    <name type="primary">RTT101</name>
    <name type="synonym">CUL8</name>
    <name type="ordered locus">YJL047C</name>
    <name type="ORF">J1166</name>
</gene>
<reference key="1">
    <citation type="journal article" date="2003" name="J. Biol. Chem.">
        <title>A role for Saccharomyces cerevisiae Cul8 ubiquitin ligase in proper anaphase progression.</title>
        <authorList>
            <person name="Michel J.J."/>
            <person name="McCarville J.F."/>
            <person name="Xiong Y."/>
        </authorList>
    </citation>
    <scope>NUCLEOTIDE SEQUENCE [GENOMIC DNA]</scope>
    <scope>FUNCTION</scope>
    <scope>INTERACTION WITH HRT1</scope>
    <scope>MUTAGENESIS OF 680-VAL--GLU-686 AND LYS-791</scope>
    <scope>DISRUPTION PHENOTYPE</scope>
</reference>
<reference key="2">
    <citation type="journal article" date="1996" name="EMBO J.">
        <title>Complete nucleotide sequence of Saccharomyces cerevisiae chromosome X.</title>
        <authorList>
            <person name="Galibert F."/>
            <person name="Alexandraki D."/>
            <person name="Baur A."/>
            <person name="Boles E."/>
            <person name="Chalwatzis N."/>
            <person name="Chuat J.-C."/>
            <person name="Coster F."/>
            <person name="Cziepluch C."/>
            <person name="de Haan M."/>
            <person name="Domdey H."/>
            <person name="Durand P."/>
            <person name="Entian K.-D."/>
            <person name="Gatius M."/>
            <person name="Goffeau A."/>
            <person name="Grivell L.A."/>
            <person name="Hennemann A."/>
            <person name="Herbert C.J."/>
            <person name="Heumann K."/>
            <person name="Hilger F."/>
            <person name="Hollenberg C.P."/>
            <person name="Huang M.-E."/>
            <person name="Jacq C."/>
            <person name="Jauniaux J.-C."/>
            <person name="Katsoulou C."/>
            <person name="Kirchrath L."/>
            <person name="Kleine K."/>
            <person name="Kordes E."/>
            <person name="Koetter P."/>
            <person name="Liebl S."/>
            <person name="Louis E.J."/>
            <person name="Manus V."/>
            <person name="Mewes H.-W."/>
            <person name="Miosga T."/>
            <person name="Obermaier B."/>
            <person name="Perea J."/>
            <person name="Pohl T.M."/>
            <person name="Portetelle D."/>
            <person name="Pujol A."/>
            <person name="Purnelle B."/>
            <person name="Ramezani Rad M."/>
            <person name="Rasmussen S.W."/>
            <person name="Rose M."/>
            <person name="Rossau R."/>
            <person name="Schaaff-Gerstenschlaeger I."/>
            <person name="Smits P.H.M."/>
            <person name="Scarcez T."/>
            <person name="Soriano N."/>
            <person name="To Van D."/>
            <person name="Tzermia M."/>
            <person name="Van Broekhoven A."/>
            <person name="Vandenbol M."/>
            <person name="Wedler H."/>
            <person name="von Wettstein D."/>
            <person name="Wambutt R."/>
            <person name="Zagulski M."/>
            <person name="Zollner A."/>
            <person name="Karpfinger-Hartl L."/>
        </authorList>
    </citation>
    <scope>NUCLEOTIDE SEQUENCE [LARGE SCALE GENOMIC DNA]</scope>
    <source>
        <strain>ATCC 204508 / S288c</strain>
    </source>
</reference>
<reference key="3">
    <citation type="journal article" date="2014" name="G3 (Bethesda)">
        <title>The reference genome sequence of Saccharomyces cerevisiae: Then and now.</title>
        <authorList>
            <person name="Engel S.R."/>
            <person name="Dietrich F.S."/>
            <person name="Fisk D.G."/>
            <person name="Binkley G."/>
            <person name="Balakrishnan R."/>
            <person name="Costanzo M.C."/>
            <person name="Dwight S.S."/>
            <person name="Hitz B.C."/>
            <person name="Karra K."/>
            <person name="Nash R.S."/>
            <person name="Weng S."/>
            <person name="Wong E.D."/>
            <person name="Lloyd P."/>
            <person name="Skrzypek M.S."/>
            <person name="Miyasato S.R."/>
            <person name="Simison M."/>
            <person name="Cherry J.M."/>
        </authorList>
    </citation>
    <scope>GENOME REANNOTATION</scope>
    <source>
        <strain>ATCC 204508 / S288c</strain>
    </source>
</reference>
<reference key="4">
    <citation type="journal article" date="2001" name="Genetics">
        <title>Multiple regulators of Ty1 transposition in Saccharomyces cerevisiae have conserved roles in genome maintenance.</title>
        <authorList>
            <person name="Scholes D.T."/>
            <person name="Banerjee M."/>
            <person name="Bowen B."/>
            <person name="Curcio M.J."/>
        </authorList>
    </citation>
    <scope>FUNCTION</scope>
</reference>
<reference key="5">
    <citation type="journal article" date="2003" name="Nature">
        <title>Global analysis of protein localization in budding yeast.</title>
        <authorList>
            <person name="Huh W.-K."/>
            <person name="Falvo J.V."/>
            <person name="Gerke L.C."/>
            <person name="Carroll A.S."/>
            <person name="Howson R.W."/>
            <person name="Weissman J.S."/>
            <person name="O'Shea E.K."/>
        </authorList>
    </citation>
    <scope>SUBCELLULAR LOCATION [LARGE SCALE ANALYSIS]</scope>
</reference>
<reference key="6">
    <citation type="journal article" date="2004" name="Biochem. J.">
        <title>Saccharomyces cerevisiae ubiquitin-like protein Rub1 conjugates to cullin proteins Rtt101 and Cul3 in vivo.</title>
        <authorList>
            <person name="Laplaza J.M."/>
            <person name="Bostick M."/>
            <person name="Scholes D.T."/>
            <person name="Curcio M.J."/>
            <person name="Callis J."/>
        </authorList>
    </citation>
    <scope>NEDDYLATION AT LYS-791</scope>
    <scope>MUTAGENESIS OF LYS-791</scope>
</reference>
<reference key="7">
    <citation type="journal article" date="2006" name="Curr. Biol.">
        <title>The cullin Rtt101p promotes replication fork progression through damaged DNA and natural pause sites.</title>
        <authorList>
            <person name="Luke B."/>
            <person name="Versini G."/>
            <person name="Jaquenoud M."/>
            <person name="Zaidi I.W."/>
            <person name="Kurz T."/>
            <person name="Pintard L."/>
            <person name="Pasero P."/>
            <person name="Peter M."/>
        </authorList>
    </citation>
    <scope>FUNCTION</scope>
</reference>
<reference key="8">
    <citation type="journal article" date="2008" name="DNA Repair">
        <title>Budding yeast Mms22 and Mms1 regulate homologous recombination induced by replisome blockage.</title>
        <authorList>
            <person name="Duro E."/>
            <person name="Vaisica J.A."/>
            <person name="Brown G.W."/>
            <person name="Rouse J."/>
        </authorList>
    </citation>
    <scope>FUNCTION</scope>
</reference>
<reference key="9">
    <citation type="journal article" date="2008" name="EMBO Rep.">
        <title>Rtt101 and Mms1 in budding yeast form a CUL4(DDB1)-like ubiquitin ligase that promotes replication through damaged DNA.</title>
        <authorList>
            <person name="Zaidi I.W."/>
            <person name="Rabut G."/>
            <person name="Poveda A."/>
            <person name="Scheel H."/>
            <person name="Malmstrom J."/>
            <person name="Ulrich H."/>
            <person name="Hofmann K."/>
            <person name="Pasero P."/>
            <person name="Peter M."/>
            <person name="Luke B."/>
        </authorList>
    </citation>
    <scope>FUNCTION</scope>
    <scope>INTERACTION WITH MMS1</scope>
    <scope>IDENTIFICATION IN COMPLEXES WITH MMS22 AND CRT10</scope>
</reference>
<reference key="10">
    <citation type="journal article" date="2008" name="Mol. Biol. Cell">
        <title>Regulation of rtt107 recruitment to stalled DNA replication forks by the cullin rtt101 and the rtt109 acetyltransferase.</title>
        <authorList>
            <person name="Roberts T.M."/>
            <person name="Zaidi I.W."/>
            <person name="Vaisica J.A."/>
            <person name="Peter M."/>
            <person name="Brown G.W."/>
        </authorList>
    </citation>
    <scope>FUNCTION</scope>
    <scope>INTERACTION WITH RTT107</scope>
</reference>
<reference key="11">
    <citation type="journal article" date="2009" name="Genes Dev.">
        <title>A role for ubiquitin in the clearance of nonfunctional rRNAs.</title>
        <authorList>
            <person name="Fujii K."/>
            <person name="Kitabatake M."/>
            <person name="Sakata T."/>
            <person name="Miyata A."/>
            <person name="Ohno M."/>
        </authorList>
    </citation>
    <scope>FUNCTION</scope>
</reference>
<reference key="12">
    <citation type="journal article" date="2010" name="J. Biol. Chem.">
        <title>Cul8/Rtt101 forms a variety of protein complexes that regulate DNA damage response and transcriptional silencing.</title>
        <authorList>
            <person name="Mimura S."/>
            <person name="Yamaguchi T."/>
            <person name="Ishii S."/>
            <person name="Noro E."/>
            <person name="Katsura T."/>
            <person name="Obuse C."/>
            <person name="Kamura T."/>
        </authorList>
    </citation>
    <scope>INTERACTION WITH MMS1</scope>
    <scope>IDENTIFICATION IN COMPLEXES WITH MMS22; RTT107; CTF4; ESC2 AND ORC5</scope>
</reference>
<reference key="13">
    <citation type="journal article" date="2010" name="Genes Dev.">
        <title>Ubiquitylation of FACT by the cullin-E3 ligase Rtt101 connects FACT to DNA replication.</title>
        <authorList>
            <person name="Han J."/>
            <person name="Li Q."/>
            <person name="McCullough L."/>
            <person name="Kettelkamp C."/>
            <person name="Formosa T."/>
            <person name="Zhang Z."/>
        </authorList>
    </citation>
    <scope>FUNCTION</scope>
</reference>
<reference key="14">
    <citation type="journal article" date="2011" name="Mol. Biol. Cell">
        <title>Mms1 and Mms22 stabilize the replisome during replication stress.</title>
        <authorList>
            <person name="Vaisica J.A."/>
            <person name="Baryshnikova A."/>
            <person name="Costanzo M."/>
            <person name="Boone C."/>
            <person name="Brown G.W."/>
        </authorList>
    </citation>
    <scope>FUNCTION</scope>
</reference>
<reference key="15">
    <citation type="journal article" date="2012" name="Proc. Natl. Acad. Sci. U.S.A.">
        <title>N-terminal acetylome analyses and functional insights of the N-terminal acetyltransferase NatB.</title>
        <authorList>
            <person name="Van Damme P."/>
            <person name="Lasa M."/>
            <person name="Polevoda B."/>
            <person name="Gazquez C."/>
            <person name="Elosegui-Artola A."/>
            <person name="Kim D.S."/>
            <person name="De Juan-Pardo E."/>
            <person name="Demeyer K."/>
            <person name="Hole K."/>
            <person name="Larrea E."/>
            <person name="Timmerman E."/>
            <person name="Prieto J."/>
            <person name="Arnesen T."/>
            <person name="Sherman F."/>
            <person name="Gevaert K."/>
            <person name="Aldabe R."/>
        </authorList>
    </citation>
    <scope>IDENTIFICATION BY MASS SPECTROMETRY [LARGE SCALE ANALYSIS]</scope>
</reference>
<reference key="16">
    <citation type="journal article" date="2013" name="Cell">
        <title>A Cul4 E3 ubiquitin ligase regulates histone hand-off during nucleosome assembly.</title>
        <authorList>
            <person name="Han J."/>
            <person name="Zhang H."/>
            <person name="Zhang H."/>
            <person name="Wang Z."/>
            <person name="Zhou H."/>
            <person name="Zhang Z."/>
        </authorList>
    </citation>
    <scope>FUNCTION IN UBIQUITINATION OF H3</scope>
</reference>
<sequence length="842" mass="99326">MINESVSKREGFHESISRETSASNALGLYNKFNDERNPRYRTMIAELHEFFHLTLAETITETDVKELECNKEKAAKFRKLMPKMLNNCRELTQRKSYIPYNSEFNGNDEKQKKFQLLHQHQIVLSFQEFCDELAKLIIDAHVLSFLTRCDYSYEIIPKNWTSFYKLFQYVMGAVGPIISYVPVNYPMIRKELGFETLTIFQYYDSKLFECMKSHFGREFSTLVSATIHHYIHMFPITNTMLEKEVPMLRIMSNCNFSIEGLSPKDFYMKTLRQYYCEESNLRPRLETFKNFKVLLTRNALLASLFSPEWVSDANDLFISHLLLNKKSISEYIEIGKDTYDEEKERYFKTETHFSLLMFRNAFEAKNMLSKFKEFCDDAVSEKLKAAYGSNHDTERLFDEVVQLANVDHLKIYSDSIEYHLCNLLGSTSKAIEQYVKYFESHLFIIVRKIKTTKKDLPRDMKIKYLNENLPILRLKFVNLPTFPNFFERSIFRKTILQSDQNSSFIKDILPVYKDSLMELFKQRIITNVSQEDEMRYRDQYQPYLSQFFQPVEVMADLRIKYASFLSFYENIEAAVKFGKTYNENNSKSFFPLIFDRERIPKVFQQSNEVKKNFVLPQEMDDTWNQFLRNYHEQNKVEDSDASKKELYPMWNLHHCEVESPYIIQDGTNLIFELTLFQTCVLTLFNESDHLTLQVISEQTKLAYKDLALVLKSFCNYKILTRDIDNTYSINESFKPDMKKVKNGKLRVVLPRTASLQSSNTGGERTSSAHHEGSNSQWTQELLKACITRSVKSERNGLDYDHLFETVKQQIKGFSVGEFKDALAKLLRDKFITRDESTATYKY</sequence>
<accession>P47050</accession>
<accession>D6VWD7</accession>
<dbReference type="EMBL" id="AY387707">
    <property type="protein sequence ID" value="AAQ91376.1"/>
    <property type="molecule type" value="Genomic_DNA"/>
</dbReference>
<dbReference type="EMBL" id="Z49322">
    <property type="protein sequence ID" value="CAA89338.1"/>
    <property type="molecule type" value="Genomic_DNA"/>
</dbReference>
<dbReference type="EMBL" id="BK006943">
    <property type="protein sequence ID" value="DAA08753.1"/>
    <property type="molecule type" value="Genomic_DNA"/>
</dbReference>
<dbReference type="PIR" id="S56819">
    <property type="entry name" value="S56819"/>
</dbReference>
<dbReference type="RefSeq" id="NP_012488.3">
    <property type="nucleotide sequence ID" value="NM_001181480.3"/>
</dbReference>
<dbReference type="BioGRID" id="33708">
    <property type="interactions" value="292"/>
</dbReference>
<dbReference type="ComplexPortal" id="CPX-1157">
    <property type="entry name" value="CUL8-MMS1-MMS22-ESC4 E3 ubiquitin ligase complex"/>
</dbReference>
<dbReference type="ComplexPortal" id="CPX-1165">
    <property type="entry name" value="CUL8-MMS1-MMS22-CTF4 E3 ubiquitin ligase complex"/>
</dbReference>
<dbReference type="ComplexPortal" id="CPX-1166">
    <property type="entry name" value="CUL8-MMS1-ESC2 E3 ubiquitin ligase complex"/>
</dbReference>
<dbReference type="ComplexPortal" id="CPX-1167">
    <property type="entry name" value="CUL8-MMS1-ORC5 E3 ubiquitin ligase complex"/>
</dbReference>
<dbReference type="DIP" id="DIP-2887N"/>
<dbReference type="FunCoup" id="P47050">
    <property type="interactions" value="148"/>
</dbReference>
<dbReference type="IntAct" id="P47050">
    <property type="interactions" value="18"/>
</dbReference>
<dbReference type="MINT" id="P47050"/>
<dbReference type="STRING" id="4932.YJL047C"/>
<dbReference type="iPTMnet" id="P47050"/>
<dbReference type="PaxDb" id="4932-YJL047C"/>
<dbReference type="PeptideAtlas" id="P47050"/>
<dbReference type="EnsemblFungi" id="YJL047C_mRNA">
    <property type="protein sequence ID" value="YJL047C"/>
    <property type="gene ID" value="YJL047C"/>
</dbReference>
<dbReference type="GeneID" id="853400"/>
<dbReference type="KEGG" id="sce:YJL047C"/>
<dbReference type="AGR" id="SGD:S000003583"/>
<dbReference type="SGD" id="S000003583">
    <property type="gene designation" value="RTT101"/>
</dbReference>
<dbReference type="VEuPathDB" id="FungiDB:YJL047C"/>
<dbReference type="eggNOG" id="KOG2166">
    <property type="taxonomic scope" value="Eukaryota"/>
</dbReference>
<dbReference type="HOGENOM" id="CLU_337750_0_0_1"/>
<dbReference type="InParanoid" id="P47050"/>
<dbReference type="OMA" id="LFQTCVL"/>
<dbReference type="OrthoDB" id="27073at2759"/>
<dbReference type="BioCyc" id="YEAST:G3O-31511-MONOMER"/>
<dbReference type="UniPathway" id="UPA00143"/>
<dbReference type="BioGRID-ORCS" id="853400">
    <property type="hits" value="1 hit in 10 CRISPR screens"/>
</dbReference>
<dbReference type="PRO" id="PR:P47050"/>
<dbReference type="Proteomes" id="UP000002311">
    <property type="component" value="Chromosome X"/>
</dbReference>
<dbReference type="RNAct" id="P47050">
    <property type="molecule type" value="protein"/>
</dbReference>
<dbReference type="GO" id="GO:0031463">
    <property type="term" value="C:Cul3-RING ubiquitin ligase complex"/>
    <property type="evidence" value="ECO:0000318"/>
    <property type="project" value="GO_Central"/>
</dbReference>
<dbReference type="GO" id="GO:0035361">
    <property type="term" value="C:Cul8-RING ubiquitin ligase complex"/>
    <property type="evidence" value="ECO:0000314"/>
    <property type="project" value="SGD"/>
</dbReference>
<dbReference type="GO" id="GO:0005737">
    <property type="term" value="C:cytoplasm"/>
    <property type="evidence" value="ECO:0007005"/>
    <property type="project" value="SGD"/>
</dbReference>
<dbReference type="GO" id="GO:0005634">
    <property type="term" value="C:nucleus"/>
    <property type="evidence" value="ECO:0007005"/>
    <property type="project" value="SGD"/>
</dbReference>
<dbReference type="GO" id="GO:0031625">
    <property type="term" value="F:ubiquitin protein ligase binding"/>
    <property type="evidence" value="ECO:0000318"/>
    <property type="project" value="GO_Central"/>
</dbReference>
<dbReference type="GO" id="GO:0004842">
    <property type="term" value="F:ubiquitin-protein transferase activity"/>
    <property type="evidence" value="ECO:0000314"/>
    <property type="project" value="SGD"/>
</dbReference>
<dbReference type="GO" id="GO:0051301">
    <property type="term" value="P:cell division"/>
    <property type="evidence" value="ECO:0007669"/>
    <property type="project" value="UniProtKB-KW"/>
</dbReference>
<dbReference type="GO" id="GO:0006281">
    <property type="term" value="P:DNA repair"/>
    <property type="evidence" value="ECO:0007669"/>
    <property type="project" value="UniProtKB-KW"/>
</dbReference>
<dbReference type="GO" id="GO:0031507">
    <property type="term" value="P:heterochromatin formation"/>
    <property type="evidence" value="ECO:0000303"/>
    <property type="project" value="ComplexPortal"/>
</dbReference>
<dbReference type="GO" id="GO:0070651">
    <property type="term" value="P:nonfunctional rRNA decay"/>
    <property type="evidence" value="ECO:0000315"/>
    <property type="project" value="SGD"/>
</dbReference>
<dbReference type="GO" id="GO:0006334">
    <property type="term" value="P:nucleosome assembly"/>
    <property type="evidence" value="ECO:0000303"/>
    <property type="project" value="ComplexPortal"/>
</dbReference>
<dbReference type="GO" id="GO:0016567">
    <property type="term" value="P:protein ubiquitination"/>
    <property type="evidence" value="ECO:0000318"/>
    <property type="project" value="GO_Central"/>
</dbReference>
<dbReference type="GO" id="GO:0006275">
    <property type="term" value="P:regulation of DNA replication"/>
    <property type="evidence" value="ECO:0000303"/>
    <property type="project" value="ComplexPortal"/>
</dbReference>
<dbReference type="GO" id="GO:0007088">
    <property type="term" value="P:regulation of mitotic nuclear division"/>
    <property type="evidence" value="ECO:0000315"/>
    <property type="project" value="SGD"/>
</dbReference>
<dbReference type="GO" id="GO:0031297">
    <property type="term" value="P:replication fork processing"/>
    <property type="evidence" value="ECO:0000315"/>
    <property type="project" value="SGD"/>
</dbReference>
<dbReference type="GO" id="GO:0010526">
    <property type="term" value="P:transposable element silencing"/>
    <property type="evidence" value="ECO:0000315"/>
    <property type="project" value="SGD"/>
</dbReference>
<dbReference type="Gene3D" id="3.30.230.130">
    <property type="entry name" value="Cullin, Chain C, Domain 2"/>
    <property type="match status" value="1"/>
</dbReference>
<dbReference type="InterPro" id="IPR016158">
    <property type="entry name" value="Cullin_homology"/>
</dbReference>
<dbReference type="InterPro" id="IPR036317">
    <property type="entry name" value="Cullin_homology_sf"/>
</dbReference>
<dbReference type="InterPro" id="IPR019559">
    <property type="entry name" value="Cullin_neddylation_domain"/>
</dbReference>
<dbReference type="SMART" id="SM00884">
    <property type="entry name" value="Cullin_Nedd8"/>
    <property type="match status" value="1"/>
</dbReference>
<dbReference type="SUPFAM" id="SSF75632">
    <property type="entry name" value="Cullin homology domain"/>
    <property type="match status" value="1"/>
</dbReference>
<dbReference type="PROSITE" id="PS50069">
    <property type="entry name" value="CULLIN_2"/>
    <property type="match status" value="1"/>
</dbReference>
<keyword id="KW-0131">Cell cycle</keyword>
<keyword id="KW-0132">Cell division</keyword>
<keyword id="KW-0963">Cytoplasm</keyword>
<keyword id="KW-0227">DNA damage</keyword>
<keyword id="KW-0234">DNA repair</keyword>
<keyword id="KW-1017">Isopeptide bond</keyword>
<keyword id="KW-0539">Nucleus</keyword>
<keyword id="KW-1185">Reference proteome</keyword>
<keyword id="KW-0832">Ubl conjugation</keyword>
<keyword id="KW-0833">Ubl conjugation pathway</keyword>
<proteinExistence type="evidence at protein level"/>
<organism>
    <name type="scientific">Saccharomyces cerevisiae (strain ATCC 204508 / S288c)</name>
    <name type="common">Baker's yeast</name>
    <dbReference type="NCBI Taxonomy" id="559292"/>
    <lineage>
        <taxon>Eukaryota</taxon>
        <taxon>Fungi</taxon>
        <taxon>Dikarya</taxon>
        <taxon>Ascomycota</taxon>
        <taxon>Saccharomycotina</taxon>
        <taxon>Saccharomycetes</taxon>
        <taxon>Saccharomycetales</taxon>
        <taxon>Saccharomycetaceae</taxon>
        <taxon>Saccharomyces</taxon>
    </lineage>
</organism>